<gene>
    <name type="primary">alr</name>
    <name type="ordered locus">LBA0269</name>
</gene>
<keyword id="KW-0413">Isomerase</keyword>
<keyword id="KW-0663">Pyridoxal phosphate</keyword>
<keyword id="KW-1185">Reference proteome</keyword>
<proteinExistence type="inferred from homology"/>
<reference key="1">
    <citation type="journal article" date="2005" name="Proc. Natl. Acad. Sci. U.S.A.">
        <title>Complete genome sequence of the probiotic lactic acid bacterium Lactobacillus acidophilus NCFM.</title>
        <authorList>
            <person name="Altermann E."/>
            <person name="Russell W.M."/>
            <person name="Azcarate-Peril M.A."/>
            <person name="Barrangou R."/>
            <person name="Buck B.L."/>
            <person name="McAuliffe O."/>
            <person name="Souther N."/>
            <person name="Dobson A."/>
            <person name="Duong T."/>
            <person name="Callanan M."/>
            <person name="Lick S."/>
            <person name="Hamrick A."/>
            <person name="Cano R."/>
            <person name="Klaenhammer T.R."/>
        </authorList>
    </citation>
    <scope>NUCLEOTIDE SEQUENCE [LARGE SCALE GENOMIC DNA]</scope>
    <source>
        <strain>ATCC 700396 / NCK56 / N2 / NCFM</strain>
    </source>
</reference>
<accession>Q5FMB2</accession>
<feature type="chain" id="PRO_1000065995" description="Alanine racemase">
    <location>
        <begin position="1"/>
        <end position="376"/>
    </location>
</feature>
<feature type="active site" description="Proton acceptor; specific for D-alanine" evidence="1">
    <location>
        <position position="40"/>
    </location>
</feature>
<feature type="active site" description="Proton acceptor; specific for L-alanine" evidence="1">
    <location>
        <position position="270"/>
    </location>
</feature>
<feature type="binding site" evidence="1">
    <location>
        <position position="138"/>
    </location>
    <ligand>
        <name>substrate</name>
    </ligand>
</feature>
<feature type="binding site" evidence="1">
    <location>
        <position position="317"/>
    </location>
    <ligand>
        <name>substrate</name>
    </ligand>
</feature>
<feature type="modified residue" description="N6-(pyridoxal phosphate)lysine" evidence="1">
    <location>
        <position position="40"/>
    </location>
</feature>
<evidence type="ECO:0000255" key="1">
    <source>
        <dbReference type="HAMAP-Rule" id="MF_01201"/>
    </source>
</evidence>
<organism>
    <name type="scientific">Lactobacillus acidophilus (strain ATCC 700396 / NCK56 / N2 / NCFM)</name>
    <dbReference type="NCBI Taxonomy" id="272621"/>
    <lineage>
        <taxon>Bacteria</taxon>
        <taxon>Bacillati</taxon>
        <taxon>Bacillota</taxon>
        <taxon>Bacilli</taxon>
        <taxon>Lactobacillales</taxon>
        <taxon>Lactobacillaceae</taxon>
        <taxon>Lactobacillus</taxon>
    </lineage>
</organism>
<dbReference type="EC" id="5.1.1.1" evidence="1"/>
<dbReference type="EMBL" id="CP000033">
    <property type="protein sequence ID" value="AAV42162.1"/>
    <property type="molecule type" value="Genomic_DNA"/>
</dbReference>
<dbReference type="RefSeq" id="WP_003548996.1">
    <property type="nucleotide sequence ID" value="NC_006814.3"/>
</dbReference>
<dbReference type="RefSeq" id="YP_193193.1">
    <property type="nucleotide sequence ID" value="NC_006814.3"/>
</dbReference>
<dbReference type="SMR" id="Q5FMB2"/>
<dbReference type="STRING" id="272621.LBA0269"/>
<dbReference type="KEGG" id="lac:LBA0269"/>
<dbReference type="PATRIC" id="fig|272621.13.peg.254"/>
<dbReference type="eggNOG" id="COG0787">
    <property type="taxonomic scope" value="Bacteria"/>
</dbReference>
<dbReference type="HOGENOM" id="CLU_028393_2_1_9"/>
<dbReference type="OrthoDB" id="9813814at2"/>
<dbReference type="BioCyc" id="LACI272621:G1G49-260-MONOMER"/>
<dbReference type="UniPathway" id="UPA00042">
    <property type="reaction ID" value="UER00497"/>
</dbReference>
<dbReference type="Proteomes" id="UP000006381">
    <property type="component" value="Chromosome"/>
</dbReference>
<dbReference type="GO" id="GO:0005829">
    <property type="term" value="C:cytosol"/>
    <property type="evidence" value="ECO:0007669"/>
    <property type="project" value="TreeGrafter"/>
</dbReference>
<dbReference type="GO" id="GO:0008784">
    <property type="term" value="F:alanine racemase activity"/>
    <property type="evidence" value="ECO:0007669"/>
    <property type="project" value="UniProtKB-UniRule"/>
</dbReference>
<dbReference type="GO" id="GO:0030170">
    <property type="term" value="F:pyridoxal phosphate binding"/>
    <property type="evidence" value="ECO:0007669"/>
    <property type="project" value="UniProtKB-UniRule"/>
</dbReference>
<dbReference type="GO" id="GO:0030632">
    <property type="term" value="P:D-alanine biosynthetic process"/>
    <property type="evidence" value="ECO:0007669"/>
    <property type="project" value="UniProtKB-UniRule"/>
</dbReference>
<dbReference type="GO" id="GO:0009252">
    <property type="term" value="P:peptidoglycan biosynthetic process"/>
    <property type="evidence" value="ECO:0007669"/>
    <property type="project" value="TreeGrafter"/>
</dbReference>
<dbReference type="CDD" id="cd00430">
    <property type="entry name" value="PLPDE_III_AR"/>
    <property type="match status" value="1"/>
</dbReference>
<dbReference type="FunFam" id="2.40.37.10:FF:000006">
    <property type="entry name" value="Alanine racemase"/>
    <property type="match status" value="1"/>
</dbReference>
<dbReference type="FunFam" id="3.20.20.10:FF:000002">
    <property type="entry name" value="Alanine racemase"/>
    <property type="match status" value="1"/>
</dbReference>
<dbReference type="Gene3D" id="3.20.20.10">
    <property type="entry name" value="Alanine racemase"/>
    <property type="match status" value="1"/>
</dbReference>
<dbReference type="Gene3D" id="2.40.37.10">
    <property type="entry name" value="Lyase, Ornithine Decarboxylase, Chain A, domain 1"/>
    <property type="match status" value="1"/>
</dbReference>
<dbReference type="HAMAP" id="MF_01201">
    <property type="entry name" value="Ala_racemase"/>
    <property type="match status" value="1"/>
</dbReference>
<dbReference type="InterPro" id="IPR000821">
    <property type="entry name" value="Ala_racemase"/>
</dbReference>
<dbReference type="InterPro" id="IPR009006">
    <property type="entry name" value="Ala_racemase/Decarboxylase_C"/>
</dbReference>
<dbReference type="InterPro" id="IPR011079">
    <property type="entry name" value="Ala_racemase_C"/>
</dbReference>
<dbReference type="InterPro" id="IPR001608">
    <property type="entry name" value="Ala_racemase_N"/>
</dbReference>
<dbReference type="InterPro" id="IPR020622">
    <property type="entry name" value="Ala_racemase_pyridoxalP-BS"/>
</dbReference>
<dbReference type="InterPro" id="IPR029066">
    <property type="entry name" value="PLP-binding_barrel"/>
</dbReference>
<dbReference type="NCBIfam" id="TIGR00492">
    <property type="entry name" value="alr"/>
    <property type="match status" value="1"/>
</dbReference>
<dbReference type="PANTHER" id="PTHR30511">
    <property type="entry name" value="ALANINE RACEMASE"/>
    <property type="match status" value="1"/>
</dbReference>
<dbReference type="PANTHER" id="PTHR30511:SF0">
    <property type="entry name" value="ALANINE RACEMASE, CATABOLIC-RELATED"/>
    <property type="match status" value="1"/>
</dbReference>
<dbReference type="Pfam" id="PF00842">
    <property type="entry name" value="Ala_racemase_C"/>
    <property type="match status" value="1"/>
</dbReference>
<dbReference type="Pfam" id="PF01168">
    <property type="entry name" value="Ala_racemase_N"/>
    <property type="match status" value="1"/>
</dbReference>
<dbReference type="PRINTS" id="PR00992">
    <property type="entry name" value="ALARACEMASE"/>
</dbReference>
<dbReference type="SMART" id="SM01005">
    <property type="entry name" value="Ala_racemase_C"/>
    <property type="match status" value="1"/>
</dbReference>
<dbReference type="SUPFAM" id="SSF50621">
    <property type="entry name" value="Alanine racemase C-terminal domain-like"/>
    <property type="match status" value="1"/>
</dbReference>
<dbReference type="SUPFAM" id="SSF51419">
    <property type="entry name" value="PLP-binding barrel"/>
    <property type="match status" value="1"/>
</dbReference>
<dbReference type="PROSITE" id="PS00395">
    <property type="entry name" value="ALANINE_RACEMASE"/>
    <property type="match status" value="1"/>
</dbReference>
<protein>
    <recommendedName>
        <fullName evidence="1">Alanine racemase</fullName>
        <ecNumber evidence="1">5.1.1.1</ecNumber>
    </recommendedName>
</protein>
<name>ALR_LACAC</name>
<sequence>MVPGYHRPAAVKVNLGAIRRNLENEMKHLDPGQKMLAVVKANAYGHGAVEVAKVAEEVGAAGFCVAVLDEGLQLRHADIVKPILVLGVVSPKYAPIAAVNNISLTVPNFEWLKEAEKYLAKENLQLKIHLGIDSGMGRIGFNEDDEFIEANKFLENNDQFFVEGMFAHFASADSADESYFEHQLEKFNHMKSLLTVKPKWIHVSNTAASIFHKNIKSDLVRFGIGIYGLNPSSNPASADLNPDIKLEPALSFESELTHVKTIHKGDGVSYGSTFVADKDTIIGTVPVGYADGWIRKFQGFKVKVGDKYCPIVGRICMDQFMVELPEKMPVGTKVVIISNNPDDPNNIKAAADYVNTIHYEVACLLNDRLPRIYYEK</sequence>
<comment type="function">
    <text evidence="1">Catalyzes the interconversion of L-alanine and D-alanine. May also act on other amino acids.</text>
</comment>
<comment type="catalytic activity">
    <reaction evidence="1">
        <text>L-alanine = D-alanine</text>
        <dbReference type="Rhea" id="RHEA:20249"/>
        <dbReference type="ChEBI" id="CHEBI:57416"/>
        <dbReference type="ChEBI" id="CHEBI:57972"/>
        <dbReference type="EC" id="5.1.1.1"/>
    </reaction>
</comment>
<comment type="cofactor">
    <cofactor evidence="1">
        <name>pyridoxal 5'-phosphate</name>
        <dbReference type="ChEBI" id="CHEBI:597326"/>
    </cofactor>
</comment>
<comment type="pathway">
    <text evidence="1">Amino-acid biosynthesis; D-alanine biosynthesis; D-alanine from L-alanine: step 1/1.</text>
</comment>
<comment type="similarity">
    <text evidence="1">Belongs to the alanine racemase family.</text>
</comment>